<accession>Q0BBI9</accession>
<name>DCTA_BURCM</name>
<organism>
    <name type="scientific">Burkholderia ambifaria (strain ATCC BAA-244 / DSM 16087 / CCUG 44356 / LMG 19182 / AMMD)</name>
    <name type="common">Burkholderia cepacia (strain AMMD)</name>
    <dbReference type="NCBI Taxonomy" id="339670"/>
    <lineage>
        <taxon>Bacteria</taxon>
        <taxon>Pseudomonadati</taxon>
        <taxon>Pseudomonadota</taxon>
        <taxon>Betaproteobacteria</taxon>
        <taxon>Burkholderiales</taxon>
        <taxon>Burkholderiaceae</taxon>
        <taxon>Burkholderia</taxon>
        <taxon>Burkholderia cepacia complex</taxon>
    </lineage>
</organism>
<evidence type="ECO:0000255" key="1">
    <source>
        <dbReference type="HAMAP-Rule" id="MF_01300"/>
    </source>
</evidence>
<proteinExistence type="inferred from homology"/>
<sequence>MKKKPFYKVLYVQVIFAIIVGVILGHFYPALATDMKPLGDGFIKLIKMVIGPIIFCTVVTGIAGMEDMKKVGRVGGKALLYFEVVSTFALLLGLAATHILRPGVGFNIDPATLDGKAVASYAAKAHGQSTVDFLLHIIPNTMVDAFAQGEILQILLIALLFGSVLAHLGERGKVVTDFIDGLTRVLFGIVHIVTKLAPIGAFGAMAFTIGKYGVGSLVPLLKLIGTFYLTSIVFVLVVLGTIARVTGFSIIRFVSYIKEELLIVLGTSSSEAALPQLMEKLEKAGCSRSVVGLVVPTGYSFNLDGTNIYMTMAVLFIAQATNIELTWMQQLTLLAVAMLTSKGASGVTGAGFITLAATLAVVPTIPLSGMVLILGIDRFMSECRALTNIVGNGVATVVVSAWEKELDRNKLRQALTGGGEVKTTEAAGV</sequence>
<dbReference type="EMBL" id="CP000440">
    <property type="protein sequence ID" value="ABI88484.1"/>
    <property type="molecule type" value="Genomic_DNA"/>
</dbReference>
<dbReference type="RefSeq" id="WP_011658021.1">
    <property type="nucleotide sequence ID" value="NZ_CP009798.1"/>
</dbReference>
<dbReference type="SMR" id="Q0BBI9"/>
<dbReference type="KEGG" id="bam:Bamb_2928"/>
<dbReference type="PATRIC" id="fig|339670.21.peg.1952"/>
<dbReference type="eggNOG" id="COG1301">
    <property type="taxonomic scope" value="Bacteria"/>
</dbReference>
<dbReference type="Proteomes" id="UP000000662">
    <property type="component" value="Chromosome 1"/>
</dbReference>
<dbReference type="GO" id="GO:0005886">
    <property type="term" value="C:plasma membrane"/>
    <property type="evidence" value="ECO:0007669"/>
    <property type="project" value="UniProtKB-SubCell"/>
</dbReference>
<dbReference type="GO" id="GO:0015138">
    <property type="term" value="F:fumarate transmembrane transporter activity"/>
    <property type="evidence" value="ECO:0007669"/>
    <property type="project" value="TreeGrafter"/>
</dbReference>
<dbReference type="GO" id="GO:0015366">
    <property type="term" value="F:malate:proton symporter activity"/>
    <property type="evidence" value="ECO:0007669"/>
    <property type="project" value="TreeGrafter"/>
</dbReference>
<dbReference type="GO" id="GO:0015141">
    <property type="term" value="F:succinate transmembrane transporter activity"/>
    <property type="evidence" value="ECO:0007669"/>
    <property type="project" value="TreeGrafter"/>
</dbReference>
<dbReference type="GO" id="GO:0070778">
    <property type="term" value="P:L-aspartate transmembrane transport"/>
    <property type="evidence" value="ECO:0007669"/>
    <property type="project" value="TreeGrafter"/>
</dbReference>
<dbReference type="FunFam" id="1.10.3860.10:FF:000001">
    <property type="entry name" value="C4-dicarboxylate transport protein"/>
    <property type="match status" value="1"/>
</dbReference>
<dbReference type="Gene3D" id="1.10.3860.10">
    <property type="entry name" value="Sodium:dicarboxylate symporter"/>
    <property type="match status" value="1"/>
</dbReference>
<dbReference type="HAMAP" id="MF_01300">
    <property type="entry name" value="C4_dicarb_transport"/>
    <property type="match status" value="1"/>
</dbReference>
<dbReference type="InterPro" id="IPR023954">
    <property type="entry name" value="C4_dicarb_transport"/>
</dbReference>
<dbReference type="InterPro" id="IPR001991">
    <property type="entry name" value="Na-dicarboxylate_symporter"/>
</dbReference>
<dbReference type="InterPro" id="IPR018107">
    <property type="entry name" value="Na-dicarboxylate_symporter_CS"/>
</dbReference>
<dbReference type="InterPro" id="IPR036458">
    <property type="entry name" value="Na:dicarbo_symporter_sf"/>
</dbReference>
<dbReference type="NCBIfam" id="NF002461">
    <property type="entry name" value="PRK01663.1"/>
    <property type="match status" value="1"/>
</dbReference>
<dbReference type="NCBIfam" id="NF009587">
    <property type="entry name" value="PRK13027.1"/>
    <property type="match status" value="1"/>
</dbReference>
<dbReference type="PANTHER" id="PTHR42865:SF1">
    <property type="entry name" value="AEROBIC C4-DICARBOXYLATE TRANSPORT PROTEIN"/>
    <property type="match status" value="1"/>
</dbReference>
<dbReference type="PANTHER" id="PTHR42865">
    <property type="entry name" value="PROTON/GLUTAMATE-ASPARTATE SYMPORTER"/>
    <property type="match status" value="1"/>
</dbReference>
<dbReference type="Pfam" id="PF00375">
    <property type="entry name" value="SDF"/>
    <property type="match status" value="1"/>
</dbReference>
<dbReference type="PRINTS" id="PR00173">
    <property type="entry name" value="EDTRNSPORT"/>
</dbReference>
<dbReference type="SUPFAM" id="SSF118215">
    <property type="entry name" value="Proton glutamate symport protein"/>
    <property type="match status" value="1"/>
</dbReference>
<dbReference type="PROSITE" id="PS00713">
    <property type="entry name" value="NA_DICARBOXYL_SYMP_1"/>
    <property type="match status" value="1"/>
</dbReference>
<dbReference type="PROSITE" id="PS00714">
    <property type="entry name" value="NA_DICARBOXYL_SYMP_2"/>
    <property type="match status" value="1"/>
</dbReference>
<protein>
    <recommendedName>
        <fullName evidence="1">C4-dicarboxylate transport protein</fullName>
    </recommendedName>
</protein>
<reference key="1">
    <citation type="submission" date="2006-08" db="EMBL/GenBank/DDBJ databases">
        <title>Complete sequence of chromosome 1 of Burkholderia cepacia AMMD.</title>
        <authorList>
            <person name="Copeland A."/>
            <person name="Lucas S."/>
            <person name="Lapidus A."/>
            <person name="Barry K."/>
            <person name="Detter J.C."/>
            <person name="Glavina del Rio T."/>
            <person name="Hammon N."/>
            <person name="Israni S."/>
            <person name="Pitluck S."/>
            <person name="Bruce D."/>
            <person name="Chain P."/>
            <person name="Malfatti S."/>
            <person name="Shin M."/>
            <person name="Vergez L."/>
            <person name="Schmutz J."/>
            <person name="Larimer F."/>
            <person name="Land M."/>
            <person name="Hauser L."/>
            <person name="Kyrpides N."/>
            <person name="Kim E."/>
            <person name="Parke J."/>
            <person name="Coenye T."/>
            <person name="Konstantinidis K."/>
            <person name="Ramette A."/>
            <person name="Tiedje J."/>
            <person name="Richardson P."/>
        </authorList>
    </citation>
    <scope>NUCLEOTIDE SEQUENCE [LARGE SCALE GENOMIC DNA]</scope>
    <source>
        <strain>ATCC BAA-244 / DSM 16087 / CCUG 44356 / LMG 19182 / AMMD</strain>
    </source>
</reference>
<keyword id="KW-0997">Cell inner membrane</keyword>
<keyword id="KW-1003">Cell membrane</keyword>
<keyword id="KW-0472">Membrane</keyword>
<keyword id="KW-0769">Symport</keyword>
<keyword id="KW-0812">Transmembrane</keyword>
<keyword id="KW-1133">Transmembrane helix</keyword>
<keyword id="KW-0813">Transport</keyword>
<gene>
    <name evidence="1" type="primary">dctA</name>
    <name type="ordered locus">Bamb_2928</name>
</gene>
<feature type="chain" id="PRO_0000321977" description="C4-dicarboxylate transport protein">
    <location>
        <begin position="1"/>
        <end position="429"/>
    </location>
</feature>
<feature type="transmembrane region" description="Helical" evidence="1">
    <location>
        <begin position="9"/>
        <end position="29"/>
    </location>
</feature>
<feature type="transmembrane region" description="Helical" evidence="1">
    <location>
        <begin position="45"/>
        <end position="65"/>
    </location>
</feature>
<feature type="transmembrane region" description="Helical" evidence="1">
    <location>
        <begin position="79"/>
        <end position="99"/>
    </location>
</feature>
<feature type="transmembrane region" description="Helical" evidence="1">
    <location>
        <begin position="149"/>
        <end position="169"/>
    </location>
</feature>
<feature type="transmembrane region" description="Helical" evidence="1">
    <location>
        <begin position="185"/>
        <end position="205"/>
    </location>
</feature>
<feature type="transmembrane region" description="Helical" evidence="1">
    <location>
        <begin position="223"/>
        <end position="243"/>
    </location>
</feature>
<feature type="transmembrane region" description="Helical" evidence="1">
    <location>
        <begin position="308"/>
        <end position="328"/>
    </location>
</feature>
<feature type="transmembrane region" description="Helical" evidence="1">
    <location>
        <begin position="356"/>
        <end position="376"/>
    </location>
</feature>
<comment type="function">
    <text evidence="1">Responsible for the transport of dicarboxylates such as succinate, fumarate, and malate from the periplasm across the membrane.</text>
</comment>
<comment type="subcellular location">
    <subcellularLocation>
        <location evidence="1">Cell inner membrane</location>
        <topology evidence="1">Multi-pass membrane protein</topology>
    </subcellularLocation>
</comment>
<comment type="similarity">
    <text evidence="1">Belongs to the dicarboxylate/amino acid:cation symporter (DAACS) (TC 2.A.23) family.</text>
</comment>